<accession>Q1L8H0</accession>
<protein>
    <recommendedName>
        <fullName evidence="1">Leucine-rich repeat-containing protein 14B</fullName>
    </recommendedName>
</protein>
<proteinExistence type="inferred from homology"/>
<evidence type="ECO:0000250" key="1">
    <source>
        <dbReference type="UniProtKB" id="A6NHZ5"/>
    </source>
</evidence>
<evidence type="ECO:0000250" key="2">
    <source>
        <dbReference type="UniProtKB" id="Q3UWY1"/>
    </source>
</evidence>
<evidence type="ECO:0000305" key="3"/>
<gene>
    <name evidence="1" type="primary">lrrc14b</name>
    <name type="ORF">si:dkey-231l1.3</name>
</gene>
<reference key="1">
    <citation type="journal article" date="2013" name="Nature">
        <title>The zebrafish reference genome sequence and its relationship to the human genome.</title>
        <authorList>
            <person name="Howe K."/>
            <person name="Clark M.D."/>
            <person name="Torroja C.F."/>
            <person name="Torrance J."/>
            <person name="Berthelot C."/>
            <person name="Muffato M."/>
            <person name="Collins J.E."/>
            <person name="Humphray S."/>
            <person name="McLaren K."/>
            <person name="Matthews L."/>
            <person name="McLaren S."/>
            <person name="Sealy I."/>
            <person name="Caccamo M."/>
            <person name="Churcher C."/>
            <person name="Scott C."/>
            <person name="Barrett J.C."/>
            <person name="Koch R."/>
            <person name="Rauch G.J."/>
            <person name="White S."/>
            <person name="Chow W."/>
            <person name="Kilian B."/>
            <person name="Quintais L.T."/>
            <person name="Guerra-Assuncao J.A."/>
            <person name="Zhou Y."/>
            <person name="Gu Y."/>
            <person name="Yen J."/>
            <person name="Vogel J.H."/>
            <person name="Eyre T."/>
            <person name="Redmond S."/>
            <person name="Banerjee R."/>
            <person name="Chi J."/>
            <person name="Fu B."/>
            <person name="Langley E."/>
            <person name="Maguire S.F."/>
            <person name="Laird G.K."/>
            <person name="Lloyd D."/>
            <person name="Kenyon E."/>
            <person name="Donaldson S."/>
            <person name="Sehra H."/>
            <person name="Almeida-King J."/>
            <person name="Loveland J."/>
            <person name="Trevanion S."/>
            <person name="Jones M."/>
            <person name="Quail M."/>
            <person name="Willey D."/>
            <person name="Hunt A."/>
            <person name="Burton J."/>
            <person name="Sims S."/>
            <person name="McLay K."/>
            <person name="Plumb B."/>
            <person name="Davis J."/>
            <person name="Clee C."/>
            <person name="Oliver K."/>
            <person name="Clark R."/>
            <person name="Riddle C."/>
            <person name="Elliot D."/>
            <person name="Threadgold G."/>
            <person name="Harden G."/>
            <person name="Ware D."/>
            <person name="Begum S."/>
            <person name="Mortimore B."/>
            <person name="Kerry G."/>
            <person name="Heath P."/>
            <person name="Phillimore B."/>
            <person name="Tracey A."/>
            <person name="Corby N."/>
            <person name="Dunn M."/>
            <person name="Johnson C."/>
            <person name="Wood J."/>
            <person name="Clark S."/>
            <person name="Pelan S."/>
            <person name="Griffiths G."/>
            <person name="Smith M."/>
            <person name="Glithero R."/>
            <person name="Howden P."/>
            <person name="Barker N."/>
            <person name="Lloyd C."/>
            <person name="Stevens C."/>
            <person name="Harley J."/>
            <person name="Holt K."/>
            <person name="Panagiotidis G."/>
            <person name="Lovell J."/>
            <person name="Beasley H."/>
            <person name="Henderson C."/>
            <person name="Gordon D."/>
            <person name="Auger K."/>
            <person name="Wright D."/>
            <person name="Collins J."/>
            <person name="Raisen C."/>
            <person name="Dyer L."/>
            <person name="Leung K."/>
            <person name="Robertson L."/>
            <person name="Ambridge K."/>
            <person name="Leongamornlert D."/>
            <person name="McGuire S."/>
            <person name="Gilderthorp R."/>
            <person name="Griffiths C."/>
            <person name="Manthravadi D."/>
            <person name="Nichol S."/>
            <person name="Barker G."/>
            <person name="Whitehead S."/>
            <person name="Kay M."/>
            <person name="Brown J."/>
            <person name="Murnane C."/>
            <person name="Gray E."/>
            <person name="Humphries M."/>
            <person name="Sycamore N."/>
            <person name="Barker D."/>
            <person name="Saunders D."/>
            <person name="Wallis J."/>
            <person name="Babbage A."/>
            <person name="Hammond S."/>
            <person name="Mashreghi-Mohammadi M."/>
            <person name="Barr L."/>
            <person name="Martin S."/>
            <person name="Wray P."/>
            <person name="Ellington A."/>
            <person name="Matthews N."/>
            <person name="Ellwood M."/>
            <person name="Woodmansey R."/>
            <person name="Clark G."/>
            <person name="Cooper J."/>
            <person name="Tromans A."/>
            <person name="Grafham D."/>
            <person name="Skuce C."/>
            <person name="Pandian R."/>
            <person name="Andrews R."/>
            <person name="Harrison E."/>
            <person name="Kimberley A."/>
            <person name="Garnett J."/>
            <person name="Fosker N."/>
            <person name="Hall R."/>
            <person name="Garner P."/>
            <person name="Kelly D."/>
            <person name="Bird C."/>
            <person name="Palmer S."/>
            <person name="Gehring I."/>
            <person name="Berger A."/>
            <person name="Dooley C.M."/>
            <person name="Ersan-Urun Z."/>
            <person name="Eser C."/>
            <person name="Geiger H."/>
            <person name="Geisler M."/>
            <person name="Karotki L."/>
            <person name="Kirn A."/>
            <person name="Konantz J."/>
            <person name="Konantz M."/>
            <person name="Oberlander M."/>
            <person name="Rudolph-Geiger S."/>
            <person name="Teucke M."/>
            <person name="Lanz C."/>
            <person name="Raddatz G."/>
            <person name="Osoegawa K."/>
            <person name="Zhu B."/>
            <person name="Rapp A."/>
            <person name="Widaa S."/>
            <person name="Langford C."/>
            <person name="Yang F."/>
            <person name="Schuster S.C."/>
            <person name="Carter N.P."/>
            <person name="Harrow J."/>
            <person name="Ning Z."/>
            <person name="Herrero J."/>
            <person name="Searle S.M."/>
            <person name="Enright A."/>
            <person name="Geisler R."/>
            <person name="Plasterk R.H."/>
            <person name="Lee C."/>
            <person name="Westerfield M."/>
            <person name="de Jong P.J."/>
            <person name="Zon L.I."/>
            <person name="Postlethwait J.H."/>
            <person name="Nusslein-Volhard C."/>
            <person name="Hubbard T.J."/>
            <person name="Roest Crollius H."/>
            <person name="Rogers J."/>
            <person name="Stemple D.L."/>
        </authorList>
    </citation>
    <scope>NUCLEOTIDE SEQUENCE [LARGE SCALE GENOMIC DNA]</scope>
    <source>
        <strain>Tuebingen</strain>
    </source>
</reference>
<feature type="chain" id="PRO_0000344242" description="Leucine-rich repeat-containing protein 14B">
    <location>
        <begin position="1"/>
        <end position="526"/>
    </location>
</feature>
<feature type="repeat" description="LRR 1; degenerate" evidence="2">
    <location>
        <begin position="103"/>
        <end position="140"/>
    </location>
</feature>
<feature type="repeat" description="LRR 2; degenerate" evidence="2">
    <location>
        <begin position="191"/>
        <end position="215"/>
    </location>
</feature>
<feature type="repeat" description="LRR 4; degenerate" evidence="2">
    <location>
        <begin position="244"/>
        <end position="279"/>
    </location>
</feature>
<feature type="repeat" description="LRR 5" evidence="2">
    <location>
        <begin position="280"/>
        <end position="304"/>
    </location>
</feature>
<feature type="repeat" description="LRR 6" evidence="2">
    <location>
        <begin position="305"/>
        <end position="336"/>
    </location>
</feature>
<feature type="repeat" description="LRR 7" evidence="2">
    <location>
        <begin position="337"/>
        <end position="355"/>
    </location>
</feature>
<feature type="repeat" description="LRR 8" evidence="2">
    <location>
        <begin position="361"/>
        <end position="388"/>
    </location>
</feature>
<feature type="repeat" description="LRR 9" evidence="2">
    <location>
        <begin position="389"/>
        <end position="413"/>
    </location>
</feature>
<dbReference type="EMBL" id="CR786578">
    <property type="protein sequence ID" value="CAK10737.1"/>
    <property type="molecule type" value="Genomic_DNA"/>
</dbReference>
<dbReference type="RefSeq" id="NP_001038578.1">
    <property type="nucleotide sequence ID" value="NM_001045113.1"/>
</dbReference>
<dbReference type="SMR" id="Q1L8H0"/>
<dbReference type="FunCoup" id="Q1L8H0">
    <property type="interactions" value="1351"/>
</dbReference>
<dbReference type="STRING" id="7955.ENSDARP00000080475"/>
<dbReference type="PaxDb" id="7955-ENSDARP00000080475"/>
<dbReference type="Ensembl" id="ENSDART00000086040">
    <property type="protein sequence ID" value="ENSDARP00000080475"/>
    <property type="gene ID" value="ENSDARG00000060788"/>
</dbReference>
<dbReference type="GeneID" id="566643"/>
<dbReference type="KEGG" id="dre:566643"/>
<dbReference type="AGR" id="ZFIN:ZDB-GENE-060503-910"/>
<dbReference type="CTD" id="389257"/>
<dbReference type="ZFIN" id="ZDB-GENE-060503-910">
    <property type="gene designation" value="lrrc14b"/>
</dbReference>
<dbReference type="eggNOG" id="ENOG502QWSJ">
    <property type="taxonomic scope" value="Eukaryota"/>
</dbReference>
<dbReference type="HOGENOM" id="CLU_039635_0_0_1"/>
<dbReference type="InParanoid" id="Q1L8H0"/>
<dbReference type="OMA" id="KACYLHE"/>
<dbReference type="OrthoDB" id="8875973at2759"/>
<dbReference type="PhylomeDB" id="Q1L8H0"/>
<dbReference type="TreeFam" id="TF332708"/>
<dbReference type="PRO" id="PR:Q1L8H0"/>
<dbReference type="Proteomes" id="UP000000437">
    <property type="component" value="Chromosome 19"/>
</dbReference>
<dbReference type="Bgee" id="ENSDARG00000060788">
    <property type="expression patterns" value="Expressed in muscle tissue and 7 other cell types or tissues"/>
</dbReference>
<dbReference type="GO" id="GO:0043066">
    <property type="term" value="P:negative regulation of apoptotic process"/>
    <property type="evidence" value="ECO:0007669"/>
    <property type="project" value="InterPro"/>
</dbReference>
<dbReference type="GO" id="GO:0045596">
    <property type="term" value="P:negative regulation of cell differentiation"/>
    <property type="evidence" value="ECO:0007669"/>
    <property type="project" value="InterPro"/>
</dbReference>
<dbReference type="GO" id="GO:0045892">
    <property type="term" value="P:negative regulation of DNA-templated transcription"/>
    <property type="evidence" value="ECO:0007669"/>
    <property type="project" value="InterPro"/>
</dbReference>
<dbReference type="GO" id="GO:0008284">
    <property type="term" value="P:positive regulation of cell population proliferation"/>
    <property type="evidence" value="ECO:0007669"/>
    <property type="project" value="InterPro"/>
</dbReference>
<dbReference type="FunFam" id="3.80.10.10:FF:000313">
    <property type="entry name" value="Leucine rich repeat containing 14B"/>
    <property type="match status" value="1"/>
</dbReference>
<dbReference type="Gene3D" id="3.80.10.10">
    <property type="entry name" value="Ribonuclease Inhibitor"/>
    <property type="match status" value="1"/>
</dbReference>
<dbReference type="InterPro" id="IPR032675">
    <property type="entry name" value="LRR_dom_sf"/>
</dbReference>
<dbReference type="InterPro" id="IPR026271">
    <property type="entry name" value="PRAME"/>
</dbReference>
<dbReference type="InterPro" id="IPR050694">
    <property type="entry name" value="PRAME_domain"/>
</dbReference>
<dbReference type="PANTHER" id="PTHR14224:SF27">
    <property type="entry name" value="LEUCINE-RICH REPEAT-CONTAINING PROTEIN 14B"/>
    <property type="match status" value="1"/>
</dbReference>
<dbReference type="PANTHER" id="PTHR14224">
    <property type="entry name" value="SIMILAR TO PREFERENTIALLY EXPRESSED ANTIGEN IN MELANOMA-LIKE 3"/>
    <property type="match status" value="1"/>
</dbReference>
<dbReference type="PIRSF" id="PIRSF038286">
    <property type="entry name" value="PRAME"/>
    <property type="match status" value="1"/>
</dbReference>
<dbReference type="SUPFAM" id="SSF52047">
    <property type="entry name" value="RNI-like"/>
    <property type="match status" value="1"/>
</dbReference>
<name>LR14B_DANRE</name>
<comment type="similarity">
    <text evidence="3">Belongs to the PRAME family. LRRC14 subfamily.</text>
</comment>
<sequence>MKTLKFLSAEAFVQTGPNARRNLHCLSYNLYPILFKASYLHEEASFLHDLVQTWPLTELNLRKLLGKTTDCPEDLTCSTCRLCLEAFLTGLRDYVLQASTTYAKILQVVDLIGIRDTEHQICQCRRTLGRWARTEMLTRVCYETMVSMQAGQSAPSAFNVEVDVRLDAFVTGRNYEVVSQALLLRRHCPLKLQFVGLRVDSLSLRNLFYLLKLVESHGPQKLEVVHNVHLEAPHIEVMLSQLKFPRLRSLTFPAQALNVHRLGLEDQDLMRVLGELMSKLTELRELYLGFSTLTGHLRKLLSPLNTPLECIELANCSINALDMAYFANSLHSEHLVKLDLSGHEVADLFPNTFRKLLQRCSSTLISLGLEECGLDDEKLDLLTQALTPCHGLQELKILGNPLTSAALHRLFNTLANAYPALRYVELPVPRDCYPESVTYPLDDRTLVNYDSDKFQQARTELVGILEREGKGHVEVCTPLLGVYDADINETSNELGVSMLSSFNNVIGSFIDTVNTVTQRREHRLME</sequence>
<organism>
    <name type="scientific">Danio rerio</name>
    <name type="common">Zebrafish</name>
    <name type="synonym">Brachydanio rerio</name>
    <dbReference type="NCBI Taxonomy" id="7955"/>
    <lineage>
        <taxon>Eukaryota</taxon>
        <taxon>Metazoa</taxon>
        <taxon>Chordata</taxon>
        <taxon>Craniata</taxon>
        <taxon>Vertebrata</taxon>
        <taxon>Euteleostomi</taxon>
        <taxon>Actinopterygii</taxon>
        <taxon>Neopterygii</taxon>
        <taxon>Teleostei</taxon>
        <taxon>Ostariophysi</taxon>
        <taxon>Cypriniformes</taxon>
        <taxon>Danionidae</taxon>
        <taxon>Danioninae</taxon>
        <taxon>Danio</taxon>
    </lineage>
</organism>
<keyword id="KW-0433">Leucine-rich repeat</keyword>
<keyword id="KW-1185">Reference proteome</keyword>
<keyword id="KW-0677">Repeat</keyword>